<organism>
    <name type="scientific">Synechocystis sp. (strain ATCC 27184 / PCC 6803 / Kazusa)</name>
    <dbReference type="NCBI Taxonomy" id="1111708"/>
    <lineage>
        <taxon>Bacteria</taxon>
        <taxon>Bacillati</taxon>
        <taxon>Cyanobacteriota</taxon>
        <taxon>Cyanophyceae</taxon>
        <taxon>Synechococcales</taxon>
        <taxon>Merismopediaceae</taxon>
        <taxon>Synechocystis</taxon>
    </lineage>
</organism>
<accession>P74373</accession>
<comment type="function">
    <text evidence="1">Mediates electron transfer from NADH to oxygen, reducing it to water. This modular protein has 3 redox cofactors, in other organisms the same activity requires 2 or 3 proteins (By similarity).</text>
</comment>
<comment type="cofactor">
    <cofactor>
        <name>Fe cation</name>
        <dbReference type="ChEBI" id="CHEBI:24875"/>
    </cofactor>
    <text>Binds 2 iron ions per subunit.</text>
</comment>
<comment type="miscellaneous">
    <text evidence="1">By homology with NorV in E.coli, may be involved in nitric oxide detoxification.</text>
</comment>
<comment type="similarity">
    <text evidence="3">In the N-terminal section; belongs to the zinc metallo-hydrolase group 3 family.</text>
</comment>
<comment type="similarity">
    <text evidence="3">In the C-terminal section; belongs to the flavodoxin reductase family.</text>
</comment>
<sequence>MGIHAKLETVQLPLLVSCLFPPLTMPAKDVQICPIAVDTTVFRSRTWDRLKFEIEYGLQRGTTANSYLISADKIALFDPPGESFTDNFVGTLIQRLDLNSLDYVILGHVNANRAHTLKLLLSLAPQATIICSNPAAQNLEKLLADAEVNNPIQVMKGNDHLDLGRGHELTFIPTPSPRYPGQLCTYDPRTEILFTDKLFGAHVCGDQVFDEGWTIYQEDRRYYFDCLLAPAAAQVSAALNKLEAYPAQTYAPSHGPLVRYGLRELTRNYQQWLSEQQAQALNVALIYASAYGNTSTLAQAIARGITKAGVAVTAINAETSNAEEIKEAIGKSAGFIFGSPTLGGHAPTPIQTALGITLANASKTQLCGVFGSFGWSGEAIDMLENKFRDAGFSFGFDTIRVKFKPTDQTLKMCEEAGTDFAQALKKAEKRRQPKSALPESESARTEQALGRLVGSLCVVTAQQGELSSAMLASWVSQATFSPPGLTVAVAKERAIESLLHKNSCFVLNILQEGNHLGLMKHFLKPFAPGGDRFADVATETAENGAPILTESLAYLECRVQQRLECGDHWVLYAVTDRGALLKDGVTAVHHRKSGDHY</sequence>
<proteinExistence type="evidence at protein level"/>
<name>DFA3_SYNY3</name>
<evidence type="ECO:0000250" key="1"/>
<evidence type="ECO:0000255" key="2">
    <source>
        <dbReference type="PROSITE-ProRule" id="PRU00088"/>
    </source>
</evidence>
<evidence type="ECO:0000305" key="3"/>
<evidence type="ECO:0007829" key="4">
    <source>
        <dbReference type="PDB" id="6H0C"/>
    </source>
</evidence>
<gene>
    <name type="primary">dfa3</name>
    <name type="ordered locus">sll1521</name>
</gene>
<protein>
    <recommendedName>
        <fullName>Putative diflavin flavoprotein A 3</fullName>
        <ecNumber>1.-.-.-</ecNumber>
    </recommendedName>
</protein>
<dbReference type="EC" id="1.-.-.-"/>
<dbReference type="EMBL" id="BA000022">
    <property type="protein sequence ID" value="BAA18468.1"/>
    <property type="molecule type" value="Genomic_DNA"/>
</dbReference>
<dbReference type="PIR" id="S76209">
    <property type="entry name" value="S76209"/>
</dbReference>
<dbReference type="PDB" id="6H0C">
    <property type="method" value="X-ray"/>
    <property type="resolution" value="1.59 A"/>
    <property type="chains" value="A=26-431"/>
</dbReference>
<dbReference type="PDB" id="6H0D">
    <property type="method" value="X-ray"/>
    <property type="resolution" value="1.60 A"/>
    <property type="chains" value="A=26-428"/>
</dbReference>
<dbReference type="PDBsum" id="6H0C"/>
<dbReference type="PDBsum" id="6H0D"/>
<dbReference type="SMR" id="P74373"/>
<dbReference type="IntAct" id="P74373">
    <property type="interactions" value="1"/>
</dbReference>
<dbReference type="STRING" id="1148.gene:10499346"/>
<dbReference type="PaxDb" id="1148-1653555"/>
<dbReference type="EnsemblBacteria" id="BAA18468">
    <property type="protein sequence ID" value="BAA18468"/>
    <property type="gene ID" value="BAA18468"/>
</dbReference>
<dbReference type="KEGG" id="syn:sll1521"/>
<dbReference type="eggNOG" id="COG0426">
    <property type="taxonomic scope" value="Bacteria"/>
</dbReference>
<dbReference type="eggNOG" id="COG1853">
    <property type="taxonomic scope" value="Bacteria"/>
</dbReference>
<dbReference type="InParanoid" id="P74373"/>
<dbReference type="PhylomeDB" id="P74373"/>
<dbReference type="Proteomes" id="UP000001425">
    <property type="component" value="Chromosome"/>
</dbReference>
<dbReference type="GO" id="GO:0009055">
    <property type="term" value="F:electron transfer activity"/>
    <property type="evidence" value="ECO:0007669"/>
    <property type="project" value="InterPro"/>
</dbReference>
<dbReference type="GO" id="GO:0010181">
    <property type="term" value="F:FMN binding"/>
    <property type="evidence" value="ECO:0007669"/>
    <property type="project" value="InterPro"/>
</dbReference>
<dbReference type="GO" id="GO:0016646">
    <property type="term" value="F:oxidoreductase activity, acting on the CH-NH group of donors, NAD or NADP as acceptor"/>
    <property type="evidence" value="ECO:0007669"/>
    <property type="project" value="UniProtKB-ARBA"/>
</dbReference>
<dbReference type="CDD" id="cd07709">
    <property type="entry name" value="flavodiiron_proteins_MBL-fold"/>
    <property type="match status" value="1"/>
</dbReference>
<dbReference type="Gene3D" id="3.40.50.360">
    <property type="match status" value="1"/>
</dbReference>
<dbReference type="Gene3D" id="2.30.110.10">
    <property type="entry name" value="Electron Transport, Fmn-binding Protein, Chain A"/>
    <property type="match status" value="1"/>
</dbReference>
<dbReference type="Gene3D" id="3.60.15.10">
    <property type="entry name" value="Ribonuclease Z/Hydroxyacylglutathione hydrolase-like"/>
    <property type="match status" value="1"/>
</dbReference>
<dbReference type="InterPro" id="IPR002563">
    <property type="entry name" value="Flavin_Rdtase-like_dom"/>
</dbReference>
<dbReference type="InterPro" id="IPR008254">
    <property type="entry name" value="Flavodoxin/NO_synth"/>
</dbReference>
<dbReference type="InterPro" id="IPR001226">
    <property type="entry name" value="Flavodoxin_CS"/>
</dbReference>
<dbReference type="InterPro" id="IPR029039">
    <property type="entry name" value="Flavoprotein-like_sf"/>
</dbReference>
<dbReference type="InterPro" id="IPR001279">
    <property type="entry name" value="Metallo-B-lactamas"/>
</dbReference>
<dbReference type="InterPro" id="IPR051285">
    <property type="entry name" value="NADH_oxidoreductase_modular"/>
</dbReference>
<dbReference type="InterPro" id="IPR045761">
    <property type="entry name" value="ODP_dom"/>
</dbReference>
<dbReference type="InterPro" id="IPR036866">
    <property type="entry name" value="RibonucZ/Hydroxyglut_hydro"/>
</dbReference>
<dbReference type="InterPro" id="IPR012349">
    <property type="entry name" value="Split_barrel_FMN-bd"/>
</dbReference>
<dbReference type="PANTHER" id="PTHR32145">
    <property type="entry name" value="DIFLAVIN FLAVOPROTEIN A 2-RELATED"/>
    <property type="match status" value="1"/>
</dbReference>
<dbReference type="PANTHER" id="PTHR32145:SF32">
    <property type="entry name" value="DIFLAVIN FLAVOPROTEIN A 4-RELATED"/>
    <property type="match status" value="1"/>
</dbReference>
<dbReference type="Pfam" id="PF01613">
    <property type="entry name" value="Flavin_Reduct"/>
    <property type="match status" value="1"/>
</dbReference>
<dbReference type="Pfam" id="PF00258">
    <property type="entry name" value="Flavodoxin_1"/>
    <property type="match status" value="1"/>
</dbReference>
<dbReference type="Pfam" id="PF19583">
    <property type="entry name" value="ODP"/>
    <property type="match status" value="1"/>
</dbReference>
<dbReference type="SMART" id="SM00903">
    <property type="entry name" value="Flavin_Reduct"/>
    <property type="match status" value="1"/>
</dbReference>
<dbReference type="SMART" id="SM00849">
    <property type="entry name" value="Lactamase_B"/>
    <property type="match status" value="1"/>
</dbReference>
<dbReference type="SUPFAM" id="SSF52218">
    <property type="entry name" value="Flavoproteins"/>
    <property type="match status" value="1"/>
</dbReference>
<dbReference type="SUPFAM" id="SSF50475">
    <property type="entry name" value="FMN-binding split barrel"/>
    <property type="match status" value="1"/>
</dbReference>
<dbReference type="SUPFAM" id="SSF56281">
    <property type="entry name" value="Metallo-hydrolase/oxidoreductase"/>
    <property type="match status" value="1"/>
</dbReference>
<dbReference type="PROSITE" id="PS00201">
    <property type="entry name" value="FLAVODOXIN"/>
    <property type="match status" value="1"/>
</dbReference>
<dbReference type="PROSITE" id="PS50902">
    <property type="entry name" value="FLAVODOXIN_LIKE"/>
    <property type="match status" value="1"/>
</dbReference>
<keyword id="KW-0002">3D-structure</keyword>
<keyword id="KW-0249">Electron transport</keyword>
<keyword id="KW-0560">Oxidoreductase</keyword>
<keyword id="KW-1185">Reference proteome</keyword>
<keyword id="KW-0813">Transport</keyword>
<reference key="1">
    <citation type="journal article" date="1996" name="DNA Res.">
        <title>Sequence analysis of the genome of the unicellular cyanobacterium Synechocystis sp. strain PCC6803. II. Sequence determination of the entire genome and assignment of potential protein-coding regions.</title>
        <authorList>
            <person name="Kaneko T."/>
            <person name="Sato S."/>
            <person name="Kotani H."/>
            <person name="Tanaka A."/>
            <person name="Asamizu E."/>
            <person name="Nakamura Y."/>
            <person name="Miyajima N."/>
            <person name="Hirosawa M."/>
            <person name="Sugiura M."/>
            <person name="Sasamoto S."/>
            <person name="Kimura T."/>
            <person name="Hosouchi T."/>
            <person name="Matsuno A."/>
            <person name="Muraki A."/>
            <person name="Nakazaki N."/>
            <person name="Naruo K."/>
            <person name="Okumura S."/>
            <person name="Shimpo S."/>
            <person name="Takeuchi C."/>
            <person name="Wada T."/>
            <person name="Watanabe A."/>
            <person name="Yamada M."/>
            <person name="Yasuda M."/>
            <person name="Tabata S."/>
        </authorList>
    </citation>
    <scope>NUCLEOTIDE SEQUENCE [LARGE SCALE GENOMIC DNA]</scope>
    <source>
        <strain>ATCC 27184 / PCC 6803 / Kazusa</strain>
    </source>
</reference>
<feature type="chain" id="PRO_0000216803" description="Putative diflavin flavoprotein A 3">
    <location>
        <begin position="1"/>
        <end position="597"/>
    </location>
</feature>
<feature type="domain" description="Flavodoxin-like" evidence="2">
    <location>
        <begin position="283"/>
        <end position="421"/>
    </location>
</feature>
<feature type="region of interest" description="Zinc metallo-hydrolase">
    <location>
        <begin position="59"/>
        <end position="254"/>
    </location>
</feature>
<feature type="region of interest" description="Flavodoxin-reductase-like">
    <location>
        <begin position="449"/>
        <end position="597"/>
    </location>
</feature>
<feature type="strand" evidence="4">
    <location>
        <begin position="29"/>
        <end position="36"/>
    </location>
</feature>
<feature type="strand" evidence="4">
    <location>
        <begin position="39"/>
        <end position="48"/>
    </location>
</feature>
<feature type="helix" evidence="4">
    <location>
        <begin position="54"/>
        <end position="56"/>
    </location>
</feature>
<feature type="strand" evidence="4">
    <location>
        <begin position="62"/>
        <end position="77"/>
    </location>
</feature>
<feature type="turn" evidence="4">
    <location>
        <begin position="82"/>
        <end position="84"/>
    </location>
</feature>
<feature type="helix" evidence="4">
    <location>
        <begin position="85"/>
        <end position="95"/>
    </location>
</feature>
<feature type="helix" evidence="4">
    <location>
        <begin position="98"/>
        <end position="100"/>
    </location>
</feature>
<feature type="strand" evidence="4">
    <location>
        <begin position="103"/>
        <end position="105"/>
    </location>
</feature>
<feature type="helix" evidence="4">
    <location>
        <begin position="111"/>
        <end position="123"/>
    </location>
</feature>
<feature type="strand" evidence="4">
    <location>
        <begin position="128"/>
        <end position="131"/>
    </location>
</feature>
<feature type="helix" evidence="4">
    <location>
        <begin position="133"/>
        <end position="142"/>
    </location>
</feature>
<feature type="turn" evidence="4">
    <location>
        <begin position="143"/>
        <end position="145"/>
    </location>
</feature>
<feature type="strand" evidence="4">
    <location>
        <begin position="152"/>
        <end position="154"/>
    </location>
</feature>
<feature type="strand" evidence="4">
    <location>
        <begin position="160"/>
        <end position="162"/>
    </location>
</feature>
<feature type="strand" evidence="4">
    <location>
        <begin position="168"/>
        <end position="173"/>
    </location>
</feature>
<feature type="strand" evidence="4">
    <location>
        <begin position="183"/>
        <end position="187"/>
    </location>
</feature>
<feature type="turn" evidence="4">
    <location>
        <begin position="188"/>
        <end position="191"/>
    </location>
</feature>
<feature type="strand" evidence="4">
    <location>
        <begin position="192"/>
        <end position="196"/>
    </location>
</feature>
<feature type="turn" evidence="4">
    <location>
        <begin position="197"/>
        <end position="199"/>
    </location>
</feature>
<feature type="helix" evidence="4">
    <location>
        <begin position="214"/>
        <end position="227"/>
    </location>
</feature>
<feature type="helix" evidence="4">
    <location>
        <begin position="229"/>
        <end position="231"/>
    </location>
</feature>
<feature type="helix" evidence="4">
    <location>
        <begin position="232"/>
        <end position="242"/>
    </location>
</feature>
<feature type="strand" evidence="4">
    <location>
        <begin position="248"/>
        <end position="259"/>
    </location>
</feature>
<feature type="helix" evidence="4">
    <location>
        <begin position="262"/>
        <end position="278"/>
    </location>
</feature>
<feature type="strand" evidence="4">
    <location>
        <begin position="282"/>
        <end position="288"/>
    </location>
</feature>
<feature type="strand" evidence="4">
    <location>
        <begin position="290"/>
        <end position="292"/>
    </location>
</feature>
<feature type="helix" evidence="4">
    <location>
        <begin position="293"/>
        <end position="306"/>
    </location>
</feature>
<feature type="turn" evidence="4">
    <location>
        <begin position="307"/>
        <end position="309"/>
    </location>
</feature>
<feature type="strand" evidence="4">
    <location>
        <begin position="311"/>
        <end position="316"/>
    </location>
</feature>
<feature type="turn" evidence="4">
    <location>
        <begin position="317"/>
        <end position="319"/>
    </location>
</feature>
<feature type="helix" evidence="4">
    <location>
        <begin position="322"/>
        <end position="331"/>
    </location>
</feature>
<feature type="strand" evidence="4">
    <location>
        <begin position="333"/>
        <end position="338"/>
    </location>
</feature>
<feature type="helix" evidence="4">
    <location>
        <begin position="348"/>
        <end position="360"/>
    </location>
</feature>
<feature type="strand" evidence="4">
    <location>
        <begin position="365"/>
        <end position="375"/>
    </location>
</feature>
<feature type="helix" evidence="4">
    <location>
        <begin position="378"/>
        <end position="389"/>
    </location>
</feature>
<feature type="strand" evidence="4">
    <location>
        <begin position="393"/>
        <end position="396"/>
    </location>
</feature>
<feature type="strand" evidence="4">
    <location>
        <begin position="399"/>
        <end position="404"/>
    </location>
</feature>
<feature type="helix" evidence="4">
    <location>
        <begin position="407"/>
        <end position="429"/>
    </location>
</feature>